<proteinExistence type="inferred from homology"/>
<protein>
    <recommendedName>
        <fullName evidence="1">Glyoxylate/hydroxypyruvate reductase A</fullName>
        <ecNumber evidence="1">1.1.1.79</ecNumber>
        <ecNumber evidence="1">1.1.1.81</ecNumber>
    </recommendedName>
    <alternativeName>
        <fullName evidence="1">2-ketoacid reductase</fullName>
    </alternativeName>
</protein>
<reference key="1">
    <citation type="journal article" date="2006" name="PLoS Genet.">
        <title>The complete genome sequence and comparative genome analysis of the high pathogenicity Yersinia enterocolitica strain 8081.</title>
        <authorList>
            <person name="Thomson N.R."/>
            <person name="Howard S."/>
            <person name="Wren B.W."/>
            <person name="Holden M.T.G."/>
            <person name="Crossman L."/>
            <person name="Challis G.L."/>
            <person name="Churcher C."/>
            <person name="Mungall K."/>
            <person name="Brooks K."/>
            <person name="Chillingworth T."/>
            <person name="Feltwell T."/>
            <person name="Abdellah Z."/>
            <person name="Hauser H."/>
            <person name="Jagels K."/>
            <person name="Maddison M."/>
            <person name="Moule S."/>
            <person name="Sanders M."/>
            <person name="Whitehead S."/>
            <person name="Quail M.A."/>
            <person name="Dougan G."/>
            <person name="Parkhill J."/>
            <person name="Prentice M.B."/>
        </authorList>
    </citation>
    <scope>NUCLEOTIDE SEQUENCE [LARGE SCALE GENOMIC DNA]</scope>
    <source>
        <strain>NCTC 13174 / 8081</strain>
    </source>
</reference>
<organism>
    <name type="scientific">Yersinia enterocolitica serotype O:8 / biotype 1B (strain NCTC 13174 / 8081)</name>
    <dbReference type="NCBI Taxonomy" id="393305"/>
    <lineage>
        <taxon>Bacteria</taxon>
        <taxon>Pseudomonadati</taxon>
        <taxon>Pseudomonadota</taxon>
        <taxon>Gammaproteobacteria</taxon>
        <taxon>Enterobacterales</taxon>
        <taxon>Yersiniaceae</taxon>
        <taxon>Yersinia</taxon>
    </lineage>
</organism>
<dbReference type="EC" id="1.1.1.79" evidence="1"/>
<dbReference type="EC" id="1.1.1.81" evidence="1"/>
<dbReference type="EMBL" id="AM286415">
    <property type="protein sequence ID" value="CAL12470.1"/>
    <property type="molecule type" value="Genomic_DNA"/>
</dbReference>
<dbReference type="RefSeq" id="WP_005161303.1">
    <property type="nucleotide sequence ID" value="NC_008800.1"/>
</dbReference>
<dbReference type="RefSeq" id="YP_001006636.1">
    <property type="nucleotide sequence ID" value="NC_008800.1"/>
</dbReference>
<dbReference type="SMR" id="A1JRR3"/>
<dbReference type="GeneID" id="31409316"/>
<dbReference type="KEGG" id="yen:YE2422"/>
<dbReference type="PATRIC" id="fig|393305.7.peg.2574"/>
<dbReference type="eggNOG" id="COG0111">
    <property type="taxonomic scope" value="Bacteria"/>
</dbReference>
<dbReference type="HOGENOM" id="CLU_019796_1_0_6"/>
<dbReference type="OrthoDB" id="9787219at2"/>
<dbReference type="Proteomes" id="UP000000642">
    <property type="component" value="Chromosome"/>
</dbReference>
<dbReference type="GO" id="GO:0005737">
    <property type="term" value="C:cytoplasm"/>
    <property type="evidence" value="ECO:0007669"/>
    <property type="project" value="UniProtKB-SubCell"/>
</dbReference>
<dbReference type="GO" id="GO:0030267">
    <property type="term" value="F:glyoxylate reductase (NADPH) activity"/>
    <property type="evidence" value="ECO:0007669"/>
    <property type="project" value="UniProtKB-UniRule"/>
</dbReference>
<dbReference type="GO" id="GO:0008465">
    <property type="term" value="F:hydroxypyruvate reductase (NADH) activity"/>
    <property type="evidence" value="ECO:0007669"/>
    <property type="project" value="RHEA"/>
</dbReference>
<dbReference type="GO" id="GO:0120509">
    <property type="term" value="F:hydroxypyruvate reductase (NADPH) activity"/>
    <property type="evidence" value="ECO:0007669"/>
    <property type="project" value="RHEA"/>
</dbReference>
<dbReference type="GO" id="GO:0051287">
    <property type="term" value="F:NAD binding"/>
    <property type="evidence" value="ECO:0007669"/>
    <property type="project" value="InterPro"/>
</dbReference>
<dbReference type="CDD" id="cd12164">
    <property type="entry name" value="GDH_like_2"/>
    <property type="match status" value="1"/>
</dbReference>
<dbReference type="Gene3D" id="3.40.50.720">
    <property type="entry name" value="NAD(P)-binding Rossmann-like Domain"/>
    <property type="match status" value="2"/>
</dbReference>
<dbReference type="HAMAP" id="MF_01666">
    <property type="entry name" value="2_Hacid_dh_C_GhrA"/>
    <property type="match status" value="1"/>
</dbReference>
<dbReference type="InterPro" id="IPR006140">
    <property type="entry name" value="D-isomer_DH_NAD-bd"/>
</dbReference>
<dbReference type="InterPro" id="IPR023514">
    <property type="entry name" value="GhrA_Enterobacterales"/>
</dbReference>
<dbReference type="InterPro" id="IPR036291">
    <property type="entry name" value="NAD(P)-bd_dom_sf"/>
</dbReference>
<dbReference type="NCBIfam" id="NF012013">
    <property type="entry name" value="PRK15469.1"/>
    <property type="match status" value="1"/>
</dbReference>
<dbReference type="PANTHER" id="PTHR43333">
    <property type="entry name" value="2-HACID_DH_C DOMAIN-CONTAINING PROTEIN"/>
    <property type="match status" value="1"/>
</dbReference>
<dbReference type="PANTHER" id="PTHR43333:SF1">
    <property type="entry name" value="D-ISOMER SPECIFIC 2-HYDROXYACID DEHYDROGENASE NAD-BINDING DOMAIN-CONTAINING PROTEIN"/>
    <property type="match status" value="1"/>
</dbReference>
<dbReference type="Pfam" id="PF02826">
    <property type="entry name" value="2-Hacid_dh_C"/>
    <property type="match status" value="1"/>
</dbReference>
<dbReference type="SUPFAM" id="SSF51735">
    <property type="entry name" value="NAD(P)-binding Rossmann-fold domains"/>
    <property type="match status" value="1"/>
</dbReference>
<comment type="function">
    <text evidence="1">Catalyzes the NADPH-dependent reduction of glyoxylate and hydroxypyruvate into glycolate and glycerate, respectively.</text>
</comment>
<comment type="catalytic activity">
    <reaction evidence="1">
        <text>glycolate + NADP(+) = glyoxylate + NADPH + H(+)</text>
        <dbReference type="Rhea" id="RHEA:10992"/>
        <dbReference type="ChEBI" id="CHEBI:15378"/>
        <dbReference type="ChEBI" id="CHEBI:29805"/>
        <dbReference type="ChEBI" id="CHEBI:36655"/>
        <dbReference type="ChEBI" id="CHEBI:57783"/>
        <dbReference type="ChEBI" id="CHEBI:58349"/>
        <dbReference type="EC" id="1.1.1.79"/>
    </reaction>
</comment>
<comment type="catalytic activity">
    <reaction evidence="1">
        <text>(R)-glycerate + NAD(+) = 3-hydroxypyruvate + NADH + H(+)</text>
        <dbReference type="Rhea" id="RHEA:17905"/>
        <dbReference type="ChEBI" id="CHEBI:15378"/>
        <dbReference type="ChEBI" id="CHEBI:16659"/>
        <dbReference type="ChEBI" id="CHEBI:17180"/>
        <dbReference type="ChEBI" id="CHEBI:57540"/>
        <dbReference type="ChEBI" id="CHEBI:57945"/>
        <dbReference type="EC" id="1.1.1.81"/>
    </reaction>
</comment>
<comment type="catalytic activity">
    <reaction evidence="1">
        <text>(R)-glycerate + NADP(+) = 3-hydroxypyruvate + NADPH + H(+)</text>
        <dbReference type="Rhea" id="RHEA:18657"/>
        <dbReference type="ChEBI" id="CHEBI:15378"/>
        <dbReference type="ChEBI" id="CHEBI:16659"/>
        <dbReference type="ChEBI" id="CHEBI:17180"/>
        <dbReference type="ChEBI" id="CHEBI:57783"/>
        <dbReference type="ChEBI" id="CHEBI:58349"/>
        <dbReference type="EC" id="1.1.1.81"/>
    </reaction>
</comment>
<comment type="subcellular location">
    <subcellularLocation>
        <location evidence="1">Cytoplasm</location>
    </subcellularLocation>
</comment>
<comment type="similarity">
    <text evidence="1">Belongs to the D-isomer specific 2-hydroxyacid dehydrogenase family. GhrA subfamily.</text>
</comment>
<evidence type="ECO:0000255" key="1">
    <source>
        <dbReference type="HAMAP-Rule" id="MF_01666"/>
    </source>
</evidence>
<gene>
    <name evidence="1" type="primary">ghrA</name>
    <name type="ordered locus">YE2422</name>
</gene>
<keyword id="KW-0963">Cytoplasm</keyword>
<keyword id="KW-0520">NAD</keyword>
<keyword id="KW-0521">NADP</keyword>
<keyword id="KW-0560">Oxidoreductase</keyword>
<name>GHRA_YERE8</name>
<sequence>MNIIFYHPFFEAKQWLSGLQSRLPTANIRQWRRGDTQPADYALVWQPPQEMLASRVELKGVFALGAGVDAILDQERRHPGTLPAGVPLVRLEDTGMSLQMQEYVVATVLRYFRRMDEYQLQQQQKLWQPLEPHQHDKFTIGILGAGVLGKSVAHKLAEFGFTVRCWSRTPKQIDGVTSFAGQEKLPAFIQGTQLLINLLPHTPQTAGILNQSLFSQLNANAYIINIARGAHLLERDLLAAMNAGQVAAATLDVFAEEPLPSMHPFWSHPRVTITPHIAAVTLPEVAMDQVVANIQAMEAGREPVGLVDVVRGY</sequence>
<feature type="chain" id="PRO_0000348378" description="Glyoxylate/hydroxypyruvate reductase A">
    <location>
        <begin position="1"/>
        <end position="313"/>
    </location>
</feature>
<feature type="active site" evidence="1">
    <location>
        <position position="228"/>
    </location>
</feature>
<feature type="active site" description="Proton donor" evidence="1">
    <location>
        <position position="276"/>
    </location>
</feature>
<accession>A1JRR3</accession>